<keyword id="KW-0175">Coiled coil</keyword>
<keyword id="KW-0333">Golgi apparatus</keyword>
<keyword id="KW-0472">Membrane</keyword>
<keyword id="KW-0597">Phosphoprotein</keyword>
<keyword id="KW-0653">Protein transport</keyword>
<keyword id="KW-1185">Reference proteome</keyword>
<keyword id="KW-0812">Transmembrane</keyword>
<keyword id="KW-1133">Transmembrane helix</keyword>
<keyword id="KW-0813">Transport</keyword>
<gene>
    <name evidence="9" type="primary">Bet1l</name>
    <name type="synonym">Gs15</name>
</gene>
<organism>
    <name type="scientific">Rattus norvegicus</name>
    <name type="common">Rat</name>
    <dbReference type="NCBI Taxonomy" id="10116"/>
    <lineage>
        <taxon>Eukaryota</taxon>
        <taxon>Metazoa</taxon>
        <taxon>Chordata</taxon>
        <taxon>Craniata</taxon>
        <taxon>Vertebrata</taxon>
        <taxon>Euteleostomi</taxon>
        <taxon>Mammalia</taxon>
        <taxon>Eutheria</taxon>
        <taxon>Euarchontoglires</taxon>
        <taxon>Glires</taxon>
        <taxon>Rodentia</taxon>
        <taxon>Myomorpha</taxon>
        <taxon>Muroidea</taxon>
        <taxon>Muridae</taxon>
        <taxon>Murinae</taxon>
        <taxon>Rattus</taxon>
    </lineage>
</organism>
<evidence type="ECO:0000250" key="1">
    <source>
        <dbReference type="UniProtKB" id="Q9NYM9"/>
    </source>
</evidence>
<evidence type="ECO:0000255" key="2"/>
<evidence type="ECO:0000255" key="3">
    <source>
        <dbReference type="PROSITE-ProRule" id="PRU00202"/>
    </source>
</evidence>
<evidence type="ECO:0000269" key="4">
    <source>
    </source>
</evidence>
<evidence type="ECO:0000269" key="5">
    <source>
    </source>
</evidence>
<evidence type="ECO:0000269" key="6">
    <source>
    </source>
</evidence>
<evidence type="ECO:0000305" key="7"/>
<evidence type="ECO:0000312" key="8">
    <source>
        <dbReference type="EMBL" id="AAB66320.1"/>
    </source>
</evidence>
<evidence type="ECO:0000312" key="9">
    <source>
        <dbReference type="RGD" id="71051"/>
    </source>
</evidence>
<comment type="function">
    <text evidence="4 5">Vesicle SNARE required for targeting and fusion of retrograde transport vesicles with the Golgi complex. Required for the integrity of the Golgi complex.</text>
</comment>
<comment type="subunit">
    <text evidence="1 4">Component of a SNARE complex consisting of STX5, YKT6, GOSR1 and BET1L. Interacts with STX5 (By similarity).</text>
</comment>
<comment type="subcellular location">
    <subcellularLocation>
        <location>Golgi apparatus membrane</location>
        <topology>Single-pass type IV membrane protein</topology>
    </subcellularLocation>
    <subcellularLocation>
        <location>Golgi apparatus</location>
        <location>trans-Golgi network membrane</location>
    </subcellularLocation>
    <text>Present throughout the Golgi apparatus, with strongly increasing concentration from cis-Golgi to the trans-Golgi face of the stacks.</text>
</comment>
<comment type="tissue specificity">
    <text evidence="6">Widely expressed. Highest levels in heart, liver, skeletal muscle and kidney.</text>
</comment>
<protein>
    <recommendedName>
        <fullName>BET1-like protein</fullName>
    </recommendedName>
    <alternativeName>
        <fullName>Golgi SNARE with a size of 15 kDa</fullName>
        <shortName>GOS-15</shortName>
        <shortName>GS15</shortName>
    </alternativeName>
    <alternativeName>
        <fullName>Vesicle transport protein GOS15</fullName>
    </alternativeName>
</protein>
<proteinExistence type="evidence at protein level"/>
<accession>O35152</accession>
<accession>Q6PCU6</accession>
<reference evidence="7 8" key="1">
    <citation type="journal article" date="1997" name="J. Biol. Chem.">
        <title>GS15, a 15-kilodalton Golgi soluble N-ethylmaleimide-sensitive factor attachment protein receptor (SNARE) homologous to rbet1.</title>
        <authorList>
            <person name="Xu Y."/>
            <person name="Wong S.H."/>
            <person name="Zhang T."/>
            <person name="Subramaniam V.N."/>
            <person name="Hong W."/>
        </authorList>
    </citation>
    <scope>NUCLEOTIDE SEQUENCE [MRNA]</scope>
    <scope>TISSUE SPECIFICITY</scope>
    <source>
        <tissue evidence="6">Brain</tissue>
    </source>
</reference>
<reference key="2">
    <citation type="journal article" date="2004" name="Genome Res.">
        <title>The status, quality, and expansion of the NIH full-length cDNA project: the Mammalian Gene Collection (MGC).</title>
        <authorList>
            <consortium name="The MGC Project Team"/>
        </authorList>
    </citation>
    <scope>NUCLEOTIDE SEQUENCE [LARGE SCALE MRNA]</scope>
    <source>
        <tissue>Pituitary</tissue>
    </source>
</reference>
<reference evidence="7" key="3">
    <citation type="journal article" date="2002" name="Mol. Biol. Cell">
        <title>GS15 forms a SNARE complex with syntaxin 5, GS28, and Ykt6 and is implicated in traffic in the early cisternae of the Golgi apparatus.</title>
        <authorList>
            <person name="Xu Y."/>
            <person name="Martin S."/>
            <person name="James D.E."/>
            <person name="Hong W."/>
        </authorList>
    </citation>
    <scope>FUNCTION</scope>
    <scope>SUBCELLULAR LOCATION</scope>
    <scope>IDENTIFICATION IN A COMPLEX WITH STX5; YKT6 AND GOSR1</scope>
</reference>
<reference key="4">
    <citation type="journal article" date="2004" name="Mol. Biol. Cell">
        <title>Countercurrent distribution of two distinct SNARE complexes mediating transport within the Golgi stack.</title>
        <authorList>
            <person name="Volchuk A."/>
            <person name="Ravazzola M."/>
            <person name="Perrelet A."/>
            <person name="Eng W.S."/>
            <person name="Di Liberto M."/>
            <person name="Varlamov O."/>
            <person name="Fukasawa M."/>
            <person name="Engel T."/>
            <person name="Sollner T.H."/>
            <person name="Rothman J.E."/>
            <person name="Orci L."/>
        </authorList>
    </citation>
    <scope>SUBCELLULAR LOCATION</scope>
    <scope>FUNCTION</scope>
</reference>
<feature type="chain" id="PRO_0000233059" description="BET1-like protein">
    <location>
        <begin position="1"/>
        <end position="111"/>
    </location>
</feature>
<feature type="topological domain" description="Cytoplasmic" evidence="2">
    <location>
        <begin position="1"/>
        <end position="86"/>
    </location>
</feature>
<feature type="transmembrane region" description="Helical; Anchor for type IV membrane protein" evidence="2">
    <location>
        <begin position="87"/>
        <end position="107"/>
    </location>
</feature>
<feature type="topological domain" description="Vesicular" evidence="2">
    <location>
        <begin position="108"/>
        <end position="111"/>
    </location>
</feature>
<feature type="domain" description="t-SNARE coiled-coil homology" evidence="3">
    <location>
        <begin position="15"/>
        <end position="77"/>
    </location>
</feature>
<feature type="modified residue" description="Phosphoserine" evidence="1">
    <location>
        <position position="9"/>
    </location>
</feature>
<feature type="modified residue" description="Phosphoserine" evidence="1">
    <location>
        <position position="37"/>
    </location>
</feature>
<feature type="sequence conflict" description="In Ref. 2; AAH59138." evidence="7" ref="2">
    <original>V</original>
    <variation>L</variation>
    <location>
        <position position="17"/>
    </location>
</feature>
<feature type="sequence conflict" description="In Ref. 2; AAH59138." evidence="7" ref="2">
    <original>T</original>
    <variation>N</variation>
    <location>
        <position position="84"/>
    </location>
</feature>
<feature type="sequence conflict" description="In Ref. 2; AAH59138." evidence="7" ref="2">
    <original>F</original>
    <variation>L</variation>
    <location>
        <position position="106"/>
    </location>
</feature>
<name>BET1L_RAT</name>
<sequence length="111" mass="12417">MADWTRAQSSGAVEEIVDRENKRMADSLASKVTRLKSLALDIDRDTEDQNRYLDGMDSDFTSVTGLLTGSVKRFSTVARSGRDTRKLLCGMAVVLIVAFFILSYLFSRTRT</sequence>
<dbReference type="EMBL" id="AF003998">
    <property type="protein sequence ID" value="AAB66320.1"/>
    <property type="molecule type" value="mRNA"/>
</dbReference>
<dbReference type="EMBL" id="BC059138">
    <property type="protein sequence ID" value="AAH59138.1"/>
    <property type="molecule type" value="mRNA"/>
</dbReference>
<dbReference type="RefSeq" id="NP_062241.2">
    <property type="nucleotide sequence ID" value="NM_019368.3"/>
</dbReference>
<dbReference type="RefSeq" id="XP_006230636.1">
    <property type="nucleotide sequence ID" value="XM_006230574.3"/>
</dbReference>
<dbReference type="SMR" id="O35152"/>
<dbReference type="CORUM" id="O35152"/>
<dbReference type="FunCoup" id="O35152">
    <property type="interactions" value="686"/>
</dbReference>
<dbReference type="IntAct" id="O35152">
    <property type="interactions" value="4"/>
</dbReference>
<dbReference type="STRING" id="10116.ENSRNOP00000017684"/>
<dbReference type="PhosphoSitePlus" id="O35152"/>
<dbReference type="jPOST" id="O35152"/>
<dbReference type="PaxDb" id="10116-ENSRNOP00000017684"/>
<dbReference type="DNASU" id="54400"/>
<dbReference type="GeneID" id="54400"/>
<dbReference type="KEGG" id="rno:54400"/>
<dbReference type="UCSC" id="RGD:71051">
    <property type="organism name" value="rat"/>
</dbReference>
<dbReference type="AGR" id="RGD:71051"/>
<dbReference type="CTD" id="51272"/>
<dbReference type="RGD" id="71051">
    <property type="gene designation" value="Bet1l"/>
</dbReference>
<dbReference type="eggNOG" id="KOG3385">
    <property type="taxonomic scope" value="Eukaryota"/>
</dbReference>
<dbReference type="InParanoid" id="O35152"/>
<dbReference type="OrthoDB" id="32297at9989"/>
<dbReference type="PhylomeDB" id="O35152"/>
<dbReference type="TreeFam" id="TF323307"/>
<dbReference type="Reactome" id="R-RNO-6807878">
    <property type="pathway name" value="COPI-mediated anterograde transport"/>
</dbReference>
<dbReference type="Reactome" id="R-RNO-6811438">
    <property type="pathway name" value="Intra-Golgi traffic"/>
</dbReference>
<dbReference type="PRO" id="PR:O35152"/>
<dbReference type="Proteomes" id="UP000002494">
    <property type="component" value="Unplaced"/>
</dbReference>
<dbReference type="GO" id="GO:0005829">
    <property type="term" value="C:cytosol"/>
    <property type="evidence" value="ECO:0007669"/>
    <property type="project" value="GOC"/>
</dbReference>
<dbReference type="GO" id="GO:0005768">
    <property type="term" value="C:endosome"/>
    <property type="evidence" value="ECO:0000266"/>
    <property type="project" value="RGD"/>
</dbReference>
<dbReference type="GO" id="GO:0005794">
    <property type="term" value="C:Golgi apparatus"/>
    <property type="evidence" value="ECO:0000266"/>
    <property type="project" value="RGD"/>
</dbReference>
<dbReference type="GO" id="GO:0000139">
    <property type="term" value="C:Golgi membrane"/>
    <property type="evidence" value="ECO:0000314"/>
    <property type="project" value="RGD"/>
</dbReference>
<dbReference type="GO" id="GO:0005795">
    <property type="term" value="C:Golgi stack"/>
    <property type="evidence" value="ECO:0000314"/>
    <property type="project" value="RGD"/>
</dbReference>
<dbReference type="GO" id="GO:0005798">
    <property type="term" value="C:Golgi-associated vesicle"/>
    <property type="evidence" value="ECO:0000314"/>
    <property type="project" value="RGD"/>
</dbReference>
<dbReference type="GO" id="GO:0031201">
    <property type="term" value="C:SNARE complex"/>
    <property type="evidence" value="ECO:0000318"/>
    <property type="project" value="GO_Central"/>
</dbReference>
<dbReference type="GO" id="GO:0005802">
    <property type="term" value="C:trans-Golgi network"/>
    <property type="evidence" value="ECO:0000314"/>
    <property type="project" value="RGD"/>
</dbReference>
<dbReference type="GO" id="GO:0005484">
    <property type="term" value="F:SNAP receptor activity"/>
    <property type="evidence" value="ECO:0000266"/>
    <property type="project" value="RGD"/>
</dbReference>
<dbReference type="GO" id="GO:0015031">
    <property type="term" value="P:protein transport"/>
    <property type="evidence" value="ECO:0007669"/>
    <property type="project" value="UniProtKB-KW"/>
</dbReference>
<dbReference type="GO" id="GO:2000156">
    <property type="term" value="P:regulation of retrograde vesicle-mediated transport, Golgi to ER"/>
    <property type="evidence" value="ECO:0000266"/>
    <property type="project" value="RGD"/>
</dbReference>
<dbReference type="GO" id="GO:0042147">
    <property type="term" value="P:retrograde transport, endosome to Golgi"/>
    <property type="evidence" value="ECO:0000266"/>
    <property type="project" value="RGD"/>
</dbReference>
<dbReference type="CDD" id="cd15853">
    <property type="entry name" value="SNARE_Bet1"/>
    <property type="match status" value="1"/>
</dbReference>
<dbReference type="FunFam" id="1.20.5.110:FF:000038">
    <property type="entry name" value="BET1-like protein isoform X2"/>
    <property type="match status" value="1"/>
</dbReference>
<dbReference type="Gene3D" id="1.20.5.110">
    <property type="match status" value="1"/>
</dbReference>
<dbReference type="InterPro" id="IPR039899">
    <property type="entry name" value="BET1_SNARE"/>
</dbReference>
<dbReference type="InterPro" id="IPR000727">
    <property type="entry name" value="T_SNARE_dom"/>
</dbReference>
<dbReference type="PANTHER" id="PTHR12791">
    <property type="entry name" value="GOLGI SNARE BET1-RELATED"/>
    <property type="match status" value="1"/>
</dbReference>
<dbReference type="SUPFAM" id="SSF58038">
    <property type="entry name" value="SNARE fusion complex"/>
    <property type="match status" value="1"/>
</dbReference>
<dbReference type="PROSITE" id="PS50192">
    <property type="entry name" value="T_SNARE"/>
    <property type="match status" value="1"/>
</dbReference>